<sequence length="557" mass="62897">MSVIGLWLVTVTATLSLFVWQLIFLLSIPKSIVVCLIAESLFFVAWFFYWTVIYPRYLTPFRHLPTPASRSILTGNQNGLFTENSWDVARRVSQTVPNSGLIRYYVALSNERILVTNTRALSDVLTNHSHDFGKSNLAKFALKRLTGNGLGFLEGNEHKVHRKNLMPAFTRKHVKELTPIFWDKAMEMVKGMEAEVRCGKDTSTQGTGIVEIHDWATRATLDIIGTAGFGYDFGTLHNPSNEIGQQYKKMFLEPSTAFNWLELLGNYIDFRFLMTLPVKKNRDLTAGSNFMREIAKKVIRERRHELFQRMTSQAGNMKNTKKDIITTALASDCFTDDQLVDHVMAFLVAGHESTATAFEWAMYELGHRPEMQKRVRDEVRTYLPSPSAGGVKNITFESVPYLQAICNEVLRLYPFLPFATRVAEKDTWVADQFVPKGTIVAYAAHISNRDSELWSGPALDAFDPERWMEPGKESSGGANSNYAMLTFSAGPKSCIGEAWTRAELPCLVGAMVGSFEIELVEGKQADGTVYPTVDFKMGKVLKSRDGVFVRLRRLEDW</sequence>
<comment type="function">
    <text evidence="4 5">Cytochrome P450 monooxygenase; part of the gene cluster that mediates the biosynthesis of fusarielins F, G and H, decaketide compounds with 5 methylations and a decaline core that act as mycoestrogens as they stimulate growth of MCF-7 breast cancer cells (PubMed:22252016, PubMed:27983606). The initial compound in the pathway is produced by the reducing polyketide synthase FSL1. FSL1 lacks an active enoyl reductase (ER) domain and biosynthesis of fusarielins relies on the trans-acting enoyl reductase FSL5, before it is released through hydrolysis catalyzed by the thioesterase FSL2 (PubMed:22252016, PubMed:27983606). Fusarielins F, G, and H have a C11=C12 cis double bond and is fully reduced between C10 and C11 and between C12 and C13. FSL3 can be involved in the formation of the C11=C12 cis double bond by moving a hypothetical C10=C11 or C12=C13 trans double bond to form prefusarielin (PubMed:27983606). Prefusarielin is oxygenated at C15 and C16 by FSL4, resulting in fusarielin F, which subsequently is epoxidized into fusarielin G by the same enzyme (PubMed:27983606). The final step in the pathway is a reduction of the carboxylic acid moiety to yield fusarielin H via a still undetermined mechanism (PubMed:27983606).</text>
</comment>
<comment type="cofactor">
    <cofactor evidence="1">
        <name>heme</name>
        <dbReference type="ChEBI" id="CHEBI:30413"/>
    </cofactor>
</comment>
<comment type="pathway">
    <text evidence="5">Secondary metabolite biosynthesis.</text>
</comment>
<comment type="subcellular location">
    <subcellularLocation>
        <location evidence="2">Membrane</location>
        <topology evidence="2">Multi-pass membrane protein</topology>
    </subcellularLocation>
</comment>
<comment type="induction">
    <text evidence="4">Expression is positively regulated by the fusarielin biosynthesis cluster-specific transcription factor FSL7, probably via its binding at the 5'-CGGNNNCCG-3' motif present in the promoter of all the cluster genes.</text>
</comment>
<comment type="disruption phenotype">
    <text evidence="5">Abolishes the production of fusarielins F, G and H, but accumulates the intermediate prefusarielin.</text>
</comment>
<comment type="similarity">
    <text evidence="7">Belongs to the cytochrome P450 family.</text>
</comment>
<proteinExistence type="evidence at transcript level"/>
<dbReference type="EC" id="1.-.-.-" evidence="8"/>
<dbReference type="EMBL" id="HG970332">
    <property type="protein sequence ID" value="CEF75883.1"/>
    <property type="molecule type" value="Genomic_DNA"/>
</dbReference>
<dbReference type="RefSeq" id="XP_011319440.1">
    <property type="nucleotide sequence ID" value="XM_011321138.1"/>
</dbReference>
<dbReference type="SMR" id="I1S163"/>
<dbReference type="FunCoup" id="I1S163">
    <property type="interactions" value="1509"/>
</dbReference>
<dbReference type="STRING" id="229533.I1S163"/>
<dbReference type="GlyCosmos" id="I1S163">
    <property type="glycosylation" value="2 sites, No reported glycans"/>
</dbReference>
<dbReference type="KEGG" id="fgr:FGSG_10461"/>
<dbReference type="VEuPathDB" id="FungiDB:FGRAMPH1_01G08159"/>
<dbReference type="eggNOG" id="KOG0157">
    <property type="taxonomic scope" value="Eukaryota"/>
</dbReference>
<dbReference type="HOGENOM" id="CLU_001570_5_11_1"/>
<dbReference type="InParanoid" id="I1S163"/>
<dbReference type="OrthoDB" id="144004at110618"/>
<dbReference type="Proteomes" id="UP000070720">
    <property type="component" value="Chromosome 1"/>
</dbReference>
<dbReference type="GO" id="GO:0016020">
    <property type="term" value="C:membrane"/>
    <property type="evidence" value="ECO:0007669"/>
    <property type="project" value="UniProtKB-SubCell"/>
</dbReference>
<dbReference type="GO" id="GO:0020037">
    <property type="term" value="F:heme binding"/>
    <property type="evidence" value="ECO:0007669"/>
    <property type="project" value="InterPro"/>
</dbReference>
<dbReference type="GO" id="GO:0005506">
    <property type="term" value="F:iron ion binding"/>
    <property type="evidence" value="ECO:0007669"/>
    <property type="project" value="InterPro"/>
</dbReference>
<dbReference type="GO" id="GO:0004497">
    <property type="term" value="F:monooxygenase activity"/>
    <property type="evidence" value="ECO:0007669"/>
    <property type="project" value="UniProtKB-KW"/>
</dbReference>
<dbReference type="GO" id="GO:0016705">
    <property type="term" value="F:oxidoreductase activity, acting on paired donors, with incorporation or reduction of molecular oxygen"/>
    <property type="evidence" value="ECO:0007669"/>
    <property type="project" value="InterPro"/>
</dbReference>
<dbReference type="CDD" id="cd11069">
    <property type="entry name" value="CYP_FUM15-like"/>
    <property type="match status" value="1"/>
</dbReference>
<dbReference type="Gene3D" id="1.10.630.10">
    <property type="entry name" value="Cytochrome P450"/>
    <property type="match status" value="1"/>
</dbReference>
<dbReference type="InterPro" id="IPR001128">
    <property type="entry name" value="Cyt_P450"/>
</dbReference>
<dbReference type="InterPro" id="IPR017972">
    <property type="entry name" value="Cyt_P450_CS"/>
</dbReference>
<dbReference type="InterPro" id="IPR002401">
    <property type="entry name" value="Cyt_P450_E_grp-I"/>
</dbReference>
<dbReference type="InterPro" id="IPR036396">
    <property type="entry name" value="Cyt_P450_sf"/>
</dbReference>
<dbReference type="InterPro" id="IPR050121">
    <property type="entry name" value="Cytochrome_P450_monoxygenase"/>
</dbReference>
<dbReference type="PANTHER" id="PTHR24305">
    <property type="entry name" value="CYTOCHROME P450"/>
    <property type="match status" value="1"/>
</dbReference>
<dbReference type="PANTHER" id="PTHR24305:SF227">
    <property type="entry name" value="P450, PUTATIVE (EUROFUNG)-RELATED"/>
    <property type="match status" value="1"/>
</dbReference>
<dbReference type="Pfam" id="PF00067">
    <property type="entry name" value="p450"/>
    <property type="match status" value="1"/>
</dbReference>
<dbReference type="PRINTS" id="PR00463">
    <property type="entry name" value="EP450I"/>
</dbReference>
<dbReference type="PRINTS" id="PR00385">
    <property type="entry name" value="P450"/>
</dbReference>
<dbReference type="SUPFAM" id="SSF48264">
    <property type="entry name" value="Cytochrome P450"/>
    <property type="match status" value="1"/>
</dbReference>
<dbReference type="PROSITE" id="PS00086">
    <property type="entry name" value="CYTOCHROME_P450"/>
    <property type="match status" value="1"/>
</dbReference>
<organism>
    <name type="scientific">Gibberella zeae (strain ATCC MYA-4620 / CBS 123657 / FGSC 9075 / NRRL 31084 / PH-1)</name>
    <name type="common">Wheat head blight fungus</name>
    <name type="synonym">Fusarium graminearum</name>
    <dbReference type="NCBI Taxonomy" id="229533"/>
    <lineage>
        <taxon>Eukaryota</taxon>
        <taxon>Fungi</taxon>
        <taxon>Dikarya</taxon>
        <taxon>Ascomycota</taxon>
        <taxon>Pezizomycotina</taxon>
        <taxon>Sordariomycetes</taxon>
        <taxon>Hypocreomycetidae</taxon>
        <taxon>Hypocreales</taxon>
        <taxon>Nectriaceae</taxon>
        <taxon>Fusarium</taxon>
    </lineage>
</organism>
<protein>
    <recommendedName>
        <fullName evidence="6">Cytochrome P450 monooxygenase FSL4</fullName>
        <ecNumber evidence="8">1.-.-.-</ecNumber>
    </recommendedName>
    <alternativeName>
        <fullName evidence="6">Fusarielin biosynthesis cluster protein 4</fullName>
    </alternativeName>
</protein>
<name>FSL4_GIBZE</name>
<accession>I1S163</accession>
<reference key="1">
    <citation type="journal article" date="2007" name="Science">
        <title>The Fusarium graminearum genome reveals a link between localized polymorphism and pathogen specialization.</title>
        <authorList>
            <person name="Cuomo C.A."/>
            <person name="Gueldener U."/>
            <person name="Xu J.-R."/>
            <person name="Trail F."/>
            <person name="Turgeon B.G."/>
            <person name="Di Pietro A."/>
            <person name="Walton J.D."/>
            <person name="Ma L.-J."/>
            <person name="Baker S.E."/>
            <person name="Rep M."/>
            <person name="Adam G."/>
            <person name="Antoniw J."/>
            <person name="Baldwin T."/>
            <person name="Calvo S.E."/>
            <person name="Chang Y.-L."/>
            <person name="DeCaprio D."/>
            <person name="Gale L.R."/>
            <person name="Gnerre S."/>
            <person name="Goswami R.S."/>
            <person name="Hammond-Kosack K."/>
            <person name="Harris L.J."/>
            <person name="Hilburn K."/>
            <person name="Kennell J.C."/>
            <person name="Kroken S."/>
            <person name="Magnuson J.K."/>
            <person name="Mannhaupt G."/>
            <person name="Mauceli E.W."/>
            <person name="Mewes H.-W."/>
            <person name="Mitterbauer R."/>
            <person name="Muehlbauer G."/>
            <person name="Muensterkoetter M."/>
            <person name="Nelson D."/>
            <person name="O'Donnell K."/>
            <person name="Ouellet T."/>
            <person name="Qi W."/>
            <person name="Quesneville H."/>
            <person name="Roncero M.I.G."/>
            <person name="Seong K.-Y."/>
            <person name="Tetko I.V."/>
            <person name="Urban M."/>
            <person name="Waalwijk C."/>
            <person name="Ward T.J."/>
            <person name="Yao J."/>
            <person name="Birren B.W."/>
            <person name="Kistler H.C."/>
        </authorList>
    </citation>
    <scope>NUCLEOTIDE SEQUENCE [LARGE SCALE GENOMIC DNA]</scope>
    <source>
        <strain>ATCC MYA-4620 / CBS 123657 / FGSC 9075 / NRRL 31084 / PH-1</strain>
    </source>
</reference>
<reference key="2">
    <citation type="journal article" date="2010" name="Nature">
        <title>Comparative genomics reveals mobile pathogenicity chromosomes in Fusarium.</title>
        <authorList>
            <person name="Ma L.-J."/>
            <person name="van der Does H.C."/>
            <person name="Borkovich K.A."/>
            <person name="Coleman J.J."/>
            <person name="Daboussi M.-J."/>
            <person name="Di Pietro A."/>
            <person name="Dufresne M."/>
            <person name="Freitag M."/>
            <person name="Grabherr M."/>
            <person name="Henrissat B."/>
            <person name="Houterman P.M."/>
            <person name="Kang S."/>
            <person name="Shim W.-B."/>
            <person name="Woloshuk C."/>
            <person name="Xie X."/>
            <person name="Xu J.-R."/>
            <person name="Antoniw J."/>
            <person name="Baker S.E."/>
            <person name="Bluhm B.H."/>
            <person name="Breakspear A."/>
            <person name="Brown D.W."/>
            <person name="Butchko R.A.E."/>
            <person name="Chapman S."/>
            <person name="Coulson R."/>
            <person name="Coutinho P.M."/>
            <person name="Danchin E.G.J."/>
            <person name="Diener A."/>
            <person name="Gale L.R."/>
            <person name="Gardiner D.M."/>
            <person name="Goff S."/>
            <person name="Hammond-Kosack K.E."/>
            <person name="Hilburn K."/>
            <person name="Hua-Van A."/>
            <person name="Jonkers W."/>
            <person name="Kazan K."/>
            <person name="Kodira C.D."/>
            <person name="Koehrsen M."/>
            <person name="Kumar L."/>
            <person name="Lee Y.-H."/>
            <person name="Li L."/>
            <person name="Manners J.M."/>
            <person name="Miranda-Saavedra D."/>
            <person name="Mukherjee M."/>
            <person name="Park G."/>
            <person name="Park J."/>
            <person name="Park S.-Y."/>
            <person name="Proctor R.H."/>
            <person name="Regev A."/>
            <person name="Ruiz-Roldan M.C."/>
            <person name="Sain D."/>
            <person name="Sakthikumar S."/>
            <person name="Sykes S."/>
            <person name="Schwartz D.C."/>
            <person name="Turgeon B.G."/>
            <person name="Wapinski I."/>
            <person name="Yoder O."/>
            <person name="Young S."/>
            <person name="Zeng Q."/>
            <person name="Zhou S."/>
            <person name="Galagan J."/>
            <person name="Cuomo C.A."/>
            <person name="Kistler H.C."/>
            <person name="Rep M."/>
        </authorList>
    </citation>
    <scope>GENOME REANNOTATION</scope>
    <source>
        <strain>ATCC MYA-4620 / CBS 123657 / FGSC 9075 / NRRL 31084 / PH-1</strain>
    </source>
</reference>
<reference key="3">
    <citation type="journal article" date="2015" name="BMC Genomics">
        <title>The completed genome sequence of the pathogenic ascomycete fungus Fusarium graminearum.</title>
        <authorList>
            <person name="King R."/>
            <person name="Urban M."/>
            <person name="Hammond-Kosack M.C.U."/>
            <person name="Hassani-Pak K."/>
            <person name="Hammond-Kosack K.E."/>
        </authorList>
    </citation>
    <scope>NUCLEOTIDE SEQUENCE [LARGE SCALE GENOMIC DNA]</scope>
    <source>
        <strain>ATCC MYA-4620 / CBS 123657 / FGSC 9075 / NRRL 31084 / PH-1</strain>
    </source>
</reference>
<reference key="4">
    <citation type="journal article" date="2012" name="Environ. Microbiol.">
        <title>Production of novel fusarielins by ectopic activation of the polyketide synthase 9 cluster in Fusarium graminearum.</title>
        <authorList>
            <person name="Soerensen J.L."/>
            <person name="Hansen F.T."/>
            <person name="Sondergaard T.E."/>
            <person name="Staerk D."/>
            <person name="Lee T.V."/>
            <person name="Wimmer R."/>
            <person name="Klitgaard L.G."/>
            <person name="Purup S."/>
            <person name="Giese H."/>
            <person name="Frandsen R.J."/>
        </authorList>
    </citation>
    <scope>INDUCTION</scope>
    <scope>FUNCTION</scope>
</reference>
<reference key="5">
    <citation type="journal article" date="2016" name="Molecules">
        <title>Functional Analysis of the Fusarielin Biosynthetic Gene Cluster.</title>
        <authorList>
            <person name="Droce A."/>
            <person name="Saei W."/>
            <person name="Joergensen S.H."/>
            <person name="Wimmer R."/>
            <person name="Giese H."/>
            <person name="Wollenberg R.D."/>
            <person name="Sondergaard T.E."/>
            <person name="Soerensen J.L."/>
        </authorList>
    </citation>
    <scope>FUNCTION</scope>
    <scope>DISRUPTION PHENOTYPE</scope>
    <scope>PATHWAY</scope>
</reference>
<feature type="chain" id="PRO_0000444962" description="Cytochrome P450 monooxygenase FSL4" evidence="2">
    <location>
        <begin position="1"/>
        <end position="557"/>
    </location>
</feature>
<feature type="transmembrane region" description="Helical" evidence="2">
    <location>
        <begin position="6"/>
        <end position="26"/>
    </location>
</feature>
<feature type="transmembrane region" description="Helical" evidence="2">
    <location>
        <begin position="32"/>
        <end position="52"/>
    </location>
</feature>
<feature type="binding site" description="axial binding residue" evidence="1">
    <location>
        <position position="494"/>
    </location>
    <ligand>
        <name>heme</name>
        <dbReference type="ChEBI" id="CHEBI:30413"/>
    </ligand>
    <ligandPart>
        <name>Fe</name>
        <dbReference type="ChEBI" id="CHEBI:18248"/>
    </ligandPart>
</feature>
<feature type="glycosylation site" description="N-linked (GlcNAc...) asparagine" evidence="3">
    <location>
        <position position="127"/>
    </location>
</feature>
<feature type="glycosylation site" description="N-linked (GlcNAc...) asparagine" evidence="3">
    <location>
        <position position="393"/>
    </location>
</feature>
<gene>
    <name evidence="6" type="primary">FSL4</name>
    <name type="ORF">FG10461</name>
    <name type="ORF">FGRAMPH1_01T08159</name>
</gene>
<evidence type="ECO:0000250" key="1">
    <source>
        <dbReference type="UniProtKB" id="P04798"/>
    </source>
</evidence>
<evidence type="ECO:0000255" key="2"/>
<evidence type="ECO:0000255" key="3">
    <source>
        <dbReference type="PROSITE-ProRule" id="PRU00498"/>
    </source>
</evidence>
<evidence type="ECO:0000269" key="4">
    <source>
    </source>
</evidence>
<evidence type="ECO:0000269" key="5">
    <source>
    </source>
</evidence>
<evidence type="ECO:0000303" key="6">
    <source>
    </source>
</evidence>
<evidence type="ECO:0000305" key="7"/>
<evidence type="ECO:0000305" key="8">
    <source>
    </source>
</evidence>
<keyword id="KW-0325">Glycoprotein</keyword>
<keyword id="KW-0349">Heme</keyword>
<keyword id="KW-0408">Iron</keyword>
<keyword id="KW-0472">Membrane</keyword>
<keyword id="KW-0479">Metal-binding</keyword>
<keyword id="KW-0503">Monooxygenase</keyword>
<keyword id="KW-0560">Oxidoreductase</keyword>
<keyword id="KW-1185">Reference proteome</keyword>
<keyword id="KW-0812">Transmembrane</keyword>
<keyword id="KW-1133">Transmembrane helix</keyword>